<accession>P10560</accession>
<accession>P08787</accession>
<accession>Q46433</accession>
<feature type="chain" id="PRO_0000220776" description="Virulence plasmid protein pGP6-D">
    <location>
        <begin position="1"/>
        <end position="247"/>
    </location>
</feature>
<feature type="sequence variant" description="In plasmid pCHL1 and plasmid pCTT1.">
    <original>N</original>
    <variation>D</variation>
    <location>
        <position position="9"/>
    </location>
</feature>
<feature type="sequence variant" description="In plasmid pCHL1 and plasmid pCTT1.">
    <original>Q</original>
    <variation>R</variation>
    <location>
        <position position="47"/>
    </location>
</feature>
<feature type="sequence variant" description="In plasmid pCTT1.">
    <original>VLDQ</original>
    <variation>CWIE</variation>
    <location>
        <begin position="183"/>
        <end position="186"/>
    </location>
</feature>
<feature type="sequence variant" description="In plasmid pCTT1.">
    <original>K</original>
    <variation>T</variation>
    <location>
        <position position="194"/>
    </location>
</feature>
<feature type="sequence variant" description="In plasmid pCTT1.">
    <original>S</original>
    <variation>L</variation>
    <location>
        <position position="205"/>
    </location>
</feature>
<feature type="sequence variant" description="In plasmid pCTT1.">
    <original>M</original>
    <variation>I</variation>
    <location>
        <position position="222"/>
    </location>
</feature>
<organism>
    <name type="scientific">Chlamydia trachomatis</name>
    <dbReference type="NCBI Taxonomy" id="813"/>
    <lineage>
        <taxon>Bacteria</taxon>
        <taxon>Pseudomonadati</taxon>
        <taxon>Chlamydiota</taxon>
        <taxon>Chlamydiia</taxon>
        <taxon>Chlamydiales</taxon>
        <taxon>Chlamydiaceae</taxon>
        <taxon>Chlamydia/Chlamydophila group</taxon>
        <taxon>Chlamydia</taxon>
    </lineage>
</organism>
<proteinExistence type="inferred from homology"/>
<name>GP6D_CHLTH</name>
<keyword id="KW-0614">Plasmid</keyword>
<dbReference type="EMBL" id="X07547">
    <property type="protein sequence ID" value="CAA30426.1"/>
    <property type="molecule type" value="Genomic_DNA"/>
</dbReference>
<dbReference type="EMBL" id="X06707">
    <property type="protein sequence ID" value="CAA29897.1"/>
    <property type="molecule type" value="Genomic_DNA"/>
</dbReference>
<dbReference type="EMBL" id="J03321">
    <property type="protein sequence ID" value="AAA91574.1"/>
    <property type="molecule type" value="Genomic_DNA"/>
</dbReference>
<dbReference type="EMBL" id="M19487">
    <property type="protein sequence ID" value="AAB02591.1"/>
    <property type="molecule type" value="Genomic_DNA"/>
</dbReference>
<dbReference type="PIR" id="S01924">
    <property type="entry name" value="S01924"/>
</dbReference>
<dbReference type="RefSeq" id="NP_040387.1">
    <property type="nucleotide sequence ID" value="NC_001372.1"/>
</dbReference>
<dbReference type="RefSeq" id="WP_010889889.1">
    <property type="nucleotide sequence ID" value="NZ_JBEQOY010000002.1"/>
</dbReference>
<dbReference type="RefSeq" id="WP_012209819.1">
    <property type="nucleotide sequence ID" value="NZ_CVNC01000027.1"/>
</dbReference>
<dbReference type="RefSeq" id="YP_001569041.1">
    <property type="nucleotide sequence ID" value="NC_010029.2"/>
</dbReference>
<dbReference type="RefSeq" id="YP_001654087.1">
    <property type="nucleotide sequence ID" value="NC_010286.1"/>
</dbReference>
<dbReference type="RefSeq" id="YP_002842029.1">
    <property type="nucleotide sequence ID" value="NC_012625.1"/>
</dbReference>
<dbReference type="RefSeq" id="YP_002842037.1">
    <property type="nucleotide sequence ID" value="NC_012626.1"/>
</dbReference>
<dbReference type="RefSeq" id="YP_002842066.1">
    <property type="nucleotide sequence ID" value="NC_012630.1"/>
</dbReference>
<dbReference type="RefSeq" id="YP_002842074.1">
    <property type="nucleotide sequence ID" value="NC_012631.1"/>
</dbReference>
<dbReference type="OMA" id="DDECSHG"/>
<dbReference type="InterPro" id="IPR005350">
    <property type="entry name" value="UPF0137"/>
</dbReference>
<dbReference type="Pfam" id="PF03677">
    <property type="entry name" value="UPF0137"/>
    <property type="match status" value="1"/>
</dbReference>
<protein>
    <recommendedName>
        <fullName>Virulence plasmid protein pGP6-D</fullName>
    </recommendedName>
    <alternativeName>
        <fullName>Protein P-10</fullName>
    </alternativeName>
</protein>
<comment type="miscellaneous">
    <text>pGP6-D is required for growth within mammalian cells.</text>
</comment>
<comment type="miscellaneous">
    <text>The sequence shown is that of plasmid pLGV440.</text>
</comment>
<comment type="similarity">
    <text evidence="1">Belongs to the UPF0137 (pGP6-D) family.</text>
</comment>
<evidence type="ECO:0000305" key="1"/>
<reference key="1">
    <citation type="journal article" date="1988" name="Mol. Microbiol.">
        <title>The structure of a plasmid of Chlamydia trachomatis believed to be required for growth within mammalian cells.</title>
        <authorList>
            <person name="Comanducci M."/>
            <person name="Ricci S."/>
            <person name="Ratti G."/>
        </authorList>
    </citation>
    <scope>NUCLEOTIDE SEQUENCE [GENOMIC DNA]</scope>
    <source>
        <strain>L2/434/Bu</strain>
        <plasmid>pLGV440</plasmid>
    </source>
</reference>
<reference key="2">
    <citation type="journal article" date="1988" name="Nucleic Acids Res.">
        <title>Analysis of the entire nucleotide sequence of the cryptic plasmid of Chlamydia trachomatis serovar L1. Evidence for involvement in DNA replication.</title>
        <authorList>
            <person name="Hatt C."/>
            <person name="Ward M.E."/>
            <person name="Clarke I.N."/>
        </authorList>
    </citation>
    <scope>NUCLEOTIDE SEQUENCE [GENOMIC DNA]</scope>
    <source>
        <strain>L1/440/LN</strain>
        <plasmid>pLGV440</plasmid>
    </source>
</reference>
<reference key="3">
    <citation type="journal article" date="1990" name="Plasmid">
        <title>Diversity of the Chlamydia trachomatis common plasmid in biovars with different pathogenicity.</title>
        <authorList>
            <person name="Comanducci M."/>
            <person name="Ricci S."/>
            <person name="Cevenini R."/>
            <person name="Ratti G."/>
        </authorList>
    </citation>
    <scope>NUCLEOTIDE SEQUENCE [GENOMIC DNA]</scope>
    <source>
        <strain>D/GO/86</strain>
        <plasmid>pCHL1</plasmid>
    </source>
</reference>
<reference key="4">
    <citation type="journal article" date="1987" name="Plasmid">
        <title>Characterization and sequence of a plasmid from the trachoma biovar of Chlamydia trachomatis.</title>
        <authorList>
            <person name="Sriprakash K.S."/>
            <person name="Macavoy E.S."/>
        </authorList>
    </citation>
    <scope>NUCLEOTIDE SEQUENCE [GENOMIC DNA]</scope>
    <source>
        <strain>Serotype B</strain>
        <plasmid>pCTT1</plasmid>
    </source>
</reference>
<sequence length="247" mass="28307">MNKLKKEANVFFKKNQTAASLDFKKTLPSIELFSATLNSEESQSLDQLFLSESQNYSDEEFYQEDILAVKLLTGQIKSIQKQHVLLLGEKIYNARKILSKDHFSSTTFSSWIELVFRTKSSAYNALAYYELFINLPNQTLQKEFQSIPYKSAYILAARKGDLKTKVDVIGKVCGMSNSSAIRVLDQFLPSSRNKDVRETIDKSDSEKNRQLSDFLIEILRIMCSGVSLSSYNENLLQQLFELFKQKS</sequence>
<geneLocation type="plasmid">
    <name>pLGV440</name>
</geneLocation>
<geneLocation type="plasmid">
    <name>pCHL1</name>
</geneLocation>
<geneLocation type="plasmid">
    <name>pCTT1</name>
</geneLocation>